<gene>
    <name evidence="1" type="primary">truB</name>
    <name type="ordered locus">CF0544</name>
</gene>
<comment type="function">
    <text evidence="1">Responsible for synthesis of pseudouridine from uracil-55 in the psi GC loop of transfer RNAs.</text>
</comment>
<comment type="catalytic activity">
    <reaction evidence="1">
        <text>uridine(55) in tRNA = pseudouridine(55) in tRNA</text>
        <dbReference type="Rhea" id="RHEA:42532"/>
        <dbReference type="Rhea" id="RHEA-COMP:10101"/>
        <dbReference type="Rhea" id="RHEA-COMP:10102"/>
        <dbReference type="ChEBI" id="CHEBI:65314"/>
        <dbReference type="ChEBI" id="CHEBI:65315"/>
        <dbReference type="EC" id="5.4.99.25"/>
    </reaction>
</comment>
<comment type="similarity">
    <text evidence="1">Belongs to the pseudouridine synthase TruB family. Type 1 subfamily.</text>
</comment>
<organism>
    <name type="scientific">Chlamydia felis (strain Fe/C-56)</name>
    <name type="common">Chlamydophila felis</name>
    <dbReference type="NCBI Taxonomy" id="264202"/>
    <lineage>
        <taxon>Bacteria</taxon>
        <taxon>Pseudomonadati</taxon>
        <taxon>Chlamydiota</taxon>
        <taxon>Chlamydiia</taxon>
        <taxon>Chlamydiales</taxon>
        <taxon>Chlamydiaceae</taxon>
        <taxon>Chlamydia/Chlamydophila group</taxon>
        <taxon>Chlamydia</taxon>
    </lineage>
</organism>
<proteinExistence type="inferred from homology"/>
<protein>
    <recommendedName>
        <fullName evidence="1">tRNA pseudouridine synthase B</fullName>
        <ecNumber evidence="1">5.4.99.25</ecNumber>
    </recommendedName>
    <alternativeName>
        <fullName evidence="1">tRNA pseudouridine(55) synthase</fullName>
        <shortName evidence="1">Psi55 synthase</shortName>
    </alternativeName>
    <alternativeName>
        <fullName evidence="1">tRNA pseudouridylate synthase</fullName>
    </alternativeName>
    <alternativeName>
        <fullName evidence="1">tRNA-uridine isomerase</fullName>
    </alternativeName>
</protein>
<dbReference type="EC" id="5.4.99.25" evidence="1"/>
<dbReference type="EMBL" id="AP006861">
    <property type="protein sequence ID" value="BAE81316.1"/>
    <property type="molecule type" value="Genomic_DNA"/>
</dbReference>
<dbReference type="RefSeq" id="WP_011458096.1">
    <property type="nucleotide sequence ID" value="NC_007899.1"/>
</dbReference>
<dbReference type="SMR" id="Q254H2"/>
<dbReference type="STRING" id="264202.CF0544"/>
<dbReference type="KEGG" id="cfe:CF0544"/>
<dbReference type="eggNOG" id="COG0130">
    <property type="taxonomic scope" value="Bacteria"/>
</dbReference>
<dbReference type="HOGENOM" id="CLU_032087_2_0_0"/>
<dbReference type="OrthoDB" id="9802309at2"/>
<dbReference type="Proteomes" id="UP000001260">
    <property type="component" value="Chromosome"/>
</dbReference>
<dbReference type="GO" id="GO:0003723">
    <property type="term" value="F:RNA binding"/>
    <property type="evidence" value="ECO:0007669"/>
    <property type="project" value="InterPro"/>
</dbReference>
<dbReference type="GO" id="GO:0160148">
    <property type="term" value="F:tRNA pseudouridine(55) synthase activity"/>
    <property type="evidence" value="ECO:0007669"/>
    <property type="project" value="UniProtKB-EC"/>
</dbReference>
<dbReference type="GO" id="GO:1990481">
    <property type="term" value="P:mRNA pseudouridine synthesis"/>
    <property type="evidence" value="ECO:0007669"/>
    <property type="project" value="TreeGrafter"/>
</dbReference>
<dbReference type="GO" id="GO:0031119">
    <property type="term" value="P:tRNA pseudouridine synthesis"/>
    <property type="evidence" value="ECO:0007669"/>
    <property type="project" value="UniProtKB-UniRule"/>
</dbReference>
<dbReference type="CDD" id="cd02573">
    <property type="entry name" value="PseudoU_synth_EcTruB"/>
    <property type="match status" value="1"/>
</dbReference>
<dbReference type="Gene3D" id="3.30.2350.10">
    <property type="entry name" value="Pseudouridine synthase"/>
    <property type="match status" value="1"/>
</dbReference>
<dbReference type="HAMAP" id="MF_01080">
    <property type="entry name" value="TruB_bact"/>
    <property type="match status" value="1"/>
</dbReference>
<dbReference type="InterPro" id="IPR020103">
    <property type="entry name" value="PsdUridine_synth_cat_dom_sf"/>
</dbReference>
<dbReference type="InterPro" id="IPR002501">
    <property type="entry name" value="PsdUridine_synth_N"/>
</dbReference>
<dbReference type="InterPro" id="IPR014780">
    <property type="entry name" value="tRNA_psdUridine_synth_TruB"/>
</dbReference>
<dbReference type="InterPro" id="IPR032819">
    <property type="entry name" value="TruB_C"/>
</dbReference>
<dbReference type="NCBIfam" id="TIGR00431">
    <property type="entry name" value="TruB"/>
    <property type="match status" value="1"/>
</dbReference>
<dbReference type="PANTHER" id="PTHR13767:SF2">
    <property type="entry name" value="PSEUDOURIDYLATE SYNTHASE TRUB1"/>
    <property type="match status" value="1"/>
</dbReference>
<dbReference type="PANTHER" id="PTHR13767">
    <property type="entry name" value="TRNA-PSEUDOURIDINE SYNTHASE"/>
    <property type="match status" value="1"/>
</dbReference>
<dbReference type="Pfam" id="PF16198">
    <property type="entry name" value="TruB_C_2"/>
    <property type="match status" value="1"/>
</dbReference>
<dbReference type="Pfam" id="PF01509">
    <property type="entry name" value="TruB_N"/>
    <property type="match status" value="1"/>
</dbReference>
<dbReference type="SUPFAM" id="SSF55120">
    <property type="entry name" value="Pseudouridine synthase"/>
    <property type="match status" value="1"/>
</dbReference>
<accession>Q254H2</accession>
<name>TRUB_CHLFF</name>
<feature type="chain" id="PRO_1000084568" description="tRNA pseudouridine synthase B">
    <location>
        <begin position="1"/>
        <end position="235"/>
    </location>
</feature>
<feature type="active site" description="Nucleophile" evidence="1">
    <location>
        <position position="45"/>
    </location>
</feature>
<sequence length="235" mass="26428">MELATELKEGILLVDKPQGRTSFSLIRTLTKLIGVKKIGHAGTLDPFATGVMVMLIGRKFTRLSDVLLFEDKEYAAIAHLGTTTDSYDCDGKIVGRSKKVPTYEEILEAALYFQGEIQQIPPMFSAKKINGKKLYEYARQGLSIERRQSTVQVSLQITKYEYPLLYFSVQCSKGTYIRSIAHELGNMLGCGAYLEELRRLRSGSFSIDQCIDGCLLDRPDFDVSPYLRDFNGNIL</sequence>
<reference key="1">
    <citation type="journal article" date="2006" name="DNA Res.">
        <title>Genome sequence of the cat pathogen, Chlamydophila felis.</title>
        <authorList>
            <person name="Azuma Y."/>
            <person name="Hirakawa H."/>
            <person name="Yamashita A."/>
            <person name="Cai Y."/>
            <person name="Rahman M.A."/>
            <person name="Suzuki H."/>
            <person name="Mitaku S."/>
            <person name="Toh H."/>
            <person name="Goto S."/>
            <person name="Murakami T."/>
            <person name="Sugi K."/>
            <person name="Hayashi H."/>
            <person name="Fukushi H."/>
            <person name="Hattori M."/>
            <person name="Kuhara S."/>
            <person name="Shirai M."/>
        </authorList>
    </citation>
    <scope>NUCLEOTIDE SEQUENCE [LARGE SCALE GENOMIC DNA]</scope>
    <source>
        <strain>Fe/C-56</strain>
    </source>
</reference>
<evidence type="ECO:0000255" key="1">
    <source>
        <dbReference type="HAMAP-Rule" id="MF_01080"/>
    </source>
</evidence>
<keyword id="KW-0413">Isomerase</keyword>
<keyword id="KW-0819">tRNA processing</keyword>